<proteinExistence type="evidence at protein level"/>
<accession>Q03439</accession>
<reference key="1">
    <citation type="journal article" date="1990" name="J. Biochem.">
        <title>Nucleotide sequence of the gene coding for four subunits of cytochrome c oxidase from the thermophilic bacterium PS3.</title>
        <authorList>
            <person name="Ishizuka M."/>
            <person name="Machida K."/>
            <person name="Shimada S."/>
            <person name="Mogi A."/>
            <person name="Tsuchiya T."/>
            <person name="Ohmori T."/>
            <person name="Souma Y."/>
            <person name="Gonda M."/>
            <person name="Sone N."/>
        </authorList>
    </citation>
    <scope>NUCLEOTIDE SEQUENCE [GENOMIC DNA]</scope>
    <scope>PROTEIN SEQUENCE OF 1-16</scope>
</reference>
<dbReference type="EC" id="7.1.1.9"/>
<dbReference type="EMBL" id="D13955">
    <property type="protein sequence ID" value="BAA03047.1"/>
    <property type="molecule type" value="Genomic_DNA"/>
</dbReference>
<dbReference type="SMR" id="Q03439"/>
<dbReference type="GO" id="GO:0005886">
    <property type="term" value="C:plasma membrane"/>
    <property type="evidence" value="ECO:0007669"/>
    <property type="project" value="UniProtKB-SubCell"/>
</dbReference>
<dbReference type="GO" id="GO:0004129">
    <property type="term" value="F:cytochrome-c oxidase activity"/>
    <property type="evidence" value="ECO:0007669"/>
    <property type="project" value="UniProtKB-EC"/>
</dbReference>
<dbReference type="GO" id="GO:0019646">
    <property type="term" value="P:aerobic electron transport chain"/>
    <property type="evidence" value="ECO:0007669"/>
    <property type="project" value="InterPro"/>
</dbReference>
<dbReference type="CDD" id="cd02863">
    <property type="entry name" value="Ubiquinol_oxidase_III"/>
    <property type="match status" value="1"/>
</dbReference>
<dbReference type="FunFam" id="1.20.120.80:FF:000001">
    <property type="entry name" value="Cytochrome (Ubi)quinol oxidase subunit III"/>
    <property type="match status" value="1"/>
</dbReference>
<dbReference type="Gene3D" id="1.20.120.80">
    <property type="entry name" value="Cytochrome c oxidase, subunit III, four-helix bundle"/>
    <property type="match status" value="1"/>
</dbReference>
<dbReference type="InterPro" id="IPR024791">
    <property type="entry name" value="Cyt_c/ubiquinol_Oxase_su3"/>
</dbReference>
<dbReference type="InterPro" id="IPR000298">
    <property type="entry name" value="Cyt_c_oxidase-like_su3"/>
</dbReference>
<dbReference type="InterPro" id="IPR035973">
    <property type="entry name" value="Cyt_c_oxidase_su3-like_sf"/>
</dbReference>
<dbReference type="InterPro" id="IPR013833">
    <property type="entry name" value="Cyt_c_oxidase_su3_a-hlx"/>
</dbReference>
<dbReference type="InterPro" id="IPR033946">
    <property type="entry name" value="Ubiquinol_oxase_su3_dom"/>
</dbReference>
<dbReference type="PANTHER" id="PTHR11403:SF9">
    <property type="entry name" value="CYTOCHROME C OXIDASE SUBUNIT 3"/>
    <property type="match status" value="1"/>
</dbReference>
<dbReference type="PANTHER" id="PTHR11403">
    <property type="entry name" value="CYTOCHROME C OXIDASE SUBUNIT III"/>
    <property type="match status" value="1"/>
</dbReference>
<dbReference type="Pfam" id="PF00510">
    <property type="entry name" value="COX3"/>
    <property type="match status" value="1"/>
</dbReference>
<dbReference type="SUPFAM" id="SSF81452">
    <property type="entry name" value="Cytochrome c oxidase subunit III-like"/>
    <property type="match status" value="1"/>
</dbReference>
<dbReference type="PROSITE" id="PS50253">
    <property type="entry name" value="COX3"/>
    <property type="match status" value="1"/>
</dbReference>
<evidence type="ECO:0000255" key="1"/>
<evidence type="ECO:0000305" key="2"/>
<protein>
    <recommendedName>
        <fullName>Cytochrome c oxidase subunit 3</fullName>
        <ecNumber>7.1.1.9</ecNumber>
    </recommendedName>
    <alternativeName>
        <fullName>Cytochrome aa3 subunit 3</fullName>
    </alternativeName>
    <alternativeName>
        <fullName>Cytochrome c oxidase polypeptide III</fullName>
    </alternativeName>
    <alternativeName>
        <fullName>Oxidase aa(3) subunit 3</fullName>
    </alternativeName>
</protein>
<name>COX3_BACP3</name>
<sequence length="207" mass="23409">MHAEEKLTAETFPAAPERNATLEGKNKFLGFWLFLGGETVLFASLFATYLALKDKTNGGPSAEELFQMPVVFMATMLLLTSSLTSVYAIYHMKNFDFKKMQLWFGITVLLGAGFLGLEIYEFNEYVHEGHKFTTSAFASAFYTLVGTHGSHVAFGLLWILTLMIRNAKRGLNLYNAPKFYVASLYWHFIDVVWVFIFTVVYLMGMVG</sequence>
<comment type="catalytic activity">
    <reaction>
        <text>4 Fe(II)-[cytochrome c] + O2 + 8 H(+)(in) = 4 Fe(III)-[cytochrome c] + 2 H2O + 4 H(+)(out)</text>
        <dbReference type="Rhea" id="RHEA:11436"/>
        <dbReference type="Rhea" id="RHEA-COMP:10350"/>
        <dbReference type="Rhea" id="RHEA-COMP:14399"/>
        <dbReference type="ChEBI" id="CHEBI:15377"/>
        <dbReference type="ChEBI" id="CHEBI:15378"/>
        <dbReference type="ChEBI" id="CHEBI:15379"/>
        <dbReference type="ChEBI" id="CHEBI:29033"/>
        <dbReference type="ChEBI" id="CHEBI:29034"/>
        <dbReference type="EC" id="7.1.1.9"/>
    </reaction>
</comment>
<comment type="subcellular location">
    <subcellularLocation>
        <location>Cell membrane</location>
        <topology>Multi-pass membrane protein</topology>
    </subcellularLocation>
</comment>
<comment type="similarity">
    <text evidence="2">Belongs to the cytochrome c oxidase subunit 3 family.</text>
</comment>
<gene>
    <name type="primary">ctaE</name>
    <name type="synonym">caaC</name>
</gene>
<feature type="chain" id="PRO_0000183876" description="Cytochrome c oxidase subunit 3">
    <location>
        <begin position="1"/>
        <end position="207"/>
    </location>
</feature>
<feature type="transmembrane region" description="Helical" evidence="1">
    <location>
        <begin position="28"/>
        <end position="48"/>
    </location>
</feature>
<feature type="transmembrane region" description="Helical" evidence="1">
    <location>
        <begin position="70"/>
        <end position="90"/>
    </location>
</feature>
<feature type="transmembrane region" description="Helical" evidence="1">
    <location>
        <begin position="102"/>
        <end position="122"/>
    </location>
</feature>
<feature type="transmembrane region" description="Helical" evidence="1">
    <location>
        <begin position="144"/>
        <end position="164"/>
    </location>
</feature>
<feature type="transmembrane region" description="Helical" evidence="1">
    <location>
        <begin position="186"/>
        <end position="206"/>
    </location>
</feature>
<organism>
    <name type="scientific">Bacillus sp. (strain PS3)</name>
    <dbReference type="NCBI Taxonomy" id="2334"/>
    <lineage>
        <taxon>Bacteria</taxon>
        <taxon>Bacillati</taxon>
        <taxon>Bacillota</taxon>
        <taxon>Bacilli</taxon>
        <taxon>Bacillales</taxon>
        <taxon>Bacillaceae</taxon>
        <taxon>Bacillus</taxon>
    </lineage>
</organism>
<keyword id="KW-1003">Cell membrane</keyword>
<keyword id="KW-0903">Direct protein sequencing</keyword>
<keyword id="KW-0472">Membrane</keyword>
<keyword id="KW-1278">Translocase</keyword>
<keyword id="KW-0812">Transmembrane</keyword>
<keyword id="KW-1133">Transmembrane helix</keyword>